<dbReference type="GO" id="GO:0005576">
    <property type="term" value="C:extracellular region"/>
    <property type="evidence" value="ECO:0007669"/>
    <property type="project" value="UniProtKB-SubCell"/>
</dbReference>
<dbReference type="GO" id="GO:0007218">
    <property type="term" value="P:neuropeptide signaling pathway"/>
    <property type="evidence" value="ECO:0000304"/>
    <property type="project" value="UniProtKB"/>
</dbReference>
<protein>
    <recommendedName>
        <fullName>FMRFamide-like neuropeptide FLP7</fullName>
    </recommendedName>
    <alternativeName>
        <fullName>GYRKPPFNGSIF-amide</fullName>
    </alternativeName>
</protein>
<name>FAR7_PENMO</name>
<feature type="peptide" id="PRO_0000043703" description="FMRFamide-like neuropeptide FLP7">
    <location>
        <begin position="1"/>
        <end position="12"/>
    </location>
</feature>
<feature type="modified residue" description="Phenylalanine amide" evidence="1">
    <location>
        <position position="12"/>
    </location>
</feature>
<comment type="subcellular location">
    <subcellularLocation>
        <location>Secreted</location>
    </subcellularLocation>
</comment>
<comment type="mass spectrometry"/>
<comment type="similarity">
    <text evidence="2">Belongs to the FARP (FMRFamide related peptide) family.</text>
</comment>
<reference key="1">
    <citation type="journal article" date="2002" name="Comp. Biochem. Physiol.">
        <title>Seven novel FMRFamide-like neuropeptide sequences from the eyestalk of the giant tiger prawn Penaeus monodon.</title>
        <authorList>
            <person name="Sithigorngul P."/>
            <person name="Pupuem J."/>
            <person name="Krungkasem C."/>
            <person name="Longyant S."/>
            <person name="Chaivisuthangkura P."/>
            <person name="Sithigorngul W."/>
            <person name="Petsom A."/>
        </authorList>
    </citation>
    <scope>PROTEIN SEQUENCE</scope>
    <scope>AMIDATION AT PHE-12</scope>
    <scope>MASS SPECTROMETRY</scope>
    <source>
        <tissue>Eyestalk</tissue>
    </source>
</reference>
<sequence>GYRKPPFNGSIF</sequence>
<proteinExistence type="evidence at protein level"/>
<organism evidence="2">
    <name type="scientific">Penaeus monodon</name>
    <name type="common">Giant tiger prawn</name>
    <dbReference type="NCBI Taxonomy" id="6687"/>
    <lineage>
        <taxon>Eukaryota</taxon>
        <taxon>Metazoa</taxon>
        <taxon>Ecdysozoa</taxon>
        <taxon>Arthropoda</taxon>
        <taxon>Crustacea</taxon>
        <taxon>Multicrustacea</taxon>
        <taxon>Malacostraca</taxon>
        <taxon>Eumalacostraca</taxon>
        <taxon>Eucarida</taxon>
        <taxon>Decapoda</taxon>
        <taxon>Dendrobranchiata</taxon>
        <taxon>Penaeoidea</taxon>
        <taxon>Penaeidae</taxon>
        <taxon>Penaeus</taxon>
    </lineage>
</organism>
<evidence type="ECO:0000269" key="1">
    <source>
    </source>
</evidence>
<evidence type="ECO:0000305" key="2"/>
<keyword id="KW-0027">Amidation</keyword>
<keyword id="KW-0903">Direct protein sequencing</keyword>
<keyword id="KW-0527">Neuropeptide</keyword>
<keyword id="KW-0964">Secreted</keyword>
<accession>P83322</accession>